<organism>
    <name type="scientific">Buchnera aphidicola subsp. Acyrthosiphon pisum (strain 5A)</name>
    <dbReference type="NCBI Taxonomy" id="563178"/>
    <lineage>
        <taxon>Bacteria</taxon>
        <taxon>Pseudomonadati</taxon>
        <taxon>Pseudomonadota</taxon>
        <taxon>Gammaproteobacteria</taxon>
        <taxon>Enterobacterales</taxon>
        <taxon>Erwiniaceae</taxon>
        <taxon>Buchnera</taxon>
    </lineage>
</organism>
<dbReference type="EMBL" id="CP001161">
    <property type="protein sequence ID" value="ACL30618.1"/>
    <property type="molecule type" value="Genomic_DNA"/>
</dbReference>
<dbReference type="RefSeq" id="WP_009874208.1">
    <property type="nucleotide sequence ID" value="NC_011833.1"/>
</dbReference>
<dbReference type="SMR" id="B8D947"/>
<dbReference type="KEGG" id="bap:BUAP5A_249"/>
<dbReference type="HOGENOM" id="CLU_108953_3_0_6"/>
<dbReference type="OrthoDB" id="9805462at2"/>
<dbReference type="Proteomes" id="UP000006904">
    <property type="component" value="Chromosome"/>
</dbReference>
<dbReference type="GO" id="GO:0005829">
    <property type="term" value="C:cytosol"/>
    <property type="evidence" value="ECO:0007669"/>
    <property type="project" value="TreeGrafter"/>
</dbReference>
<dbReference type="GO" id="GO:0003723">
    <property type="term" value="F:RNA binding"/>
    <property type="evidence" value="ECO:0007669"/>
    <property type="project" value="UniProtKB-UniRule"/>
</dbReference>
<dbReference type="GO" id="GO:0070929">
    <property type="term" value="P:trans-translation"/>
    <property type="evidence" value="ECO:0007669"/>
    <property type="project" value="UniProtKB-UniRule"/>
</dbReference>
<dbReference type="CDD" id="cd09294">
    <property type="entry name" value="SmpB"/>
    <property type="match status" value="1"/>
</dbReference>
<dbReference type="Gene3D" id="2.40.280.10">
    <property type="match status" value="1"/>
</dbReference>
<dbReference type="HAMAP" id="MF_00023">
    <property type="entry name" value="SmpB"/>
    <property type="match status" value="1"/>
</dbReference>
<dbReference type="InterPro" id="IPR023620">
    <property type="entry name" value="SmpB"/>
</dbReference>
<dbReference type="InterPro" id="IPR000037">
    <property type="entry name" value="SsrA-bd_prot"/>
</dbReference>
<dbReference type="InterPro" id="IPR020081">
    <property type="entry name" value="SsrA-bd_prot_CS"/>
</dbReference>
<dbReference type="NCBIfam" id="NF003843">
    <property type="entry name" value="PRK05422.1"/>
    <property type="match status" value="1"/>
</dbReference>
<dbReference type="NCBIfam" id="TIGR00086">
    <property type="entry name" value="smpB"/>
    <property type="match status" value="1"/>
</dbReference>
<dbReference type="PANTHER" id="PTHR30308:SF2">
    <property type="entry name" value="SSRA-BINDING PROTEIN"/>
    <property type="match status" value="1"/>
</dbReference>
<dbReference type="PANTHER" id="PTHR30308">
    <property type="entry name" value="TMRNA-BINDING COMPONENT OF TRANS-TRANSLATION TAGGING COMPLEX"/>
    <property type="match status" value="1"/>
</dbReference>
<dbReference type="Pfam" id="PF01668">
    <property type="entry name" value="SmpB"/>
    <property type="match status" value="1"/>
</dbReference>
<dbReference type="SUPFAM" id="SSF74982">
    <property type="entry name" value="Small protein B (SmpB)"/>
    <property type="match status" value="1"/>
</dbReference>
<dbReference type="PROSITE" id="PS01317">
    <property type="entry name" value="SSRP"/>
    <property type="match status" value="1"/>
</dbReference>
<protein>
    <recommendedName>
        <fullName evidence="1">SsrA-binding protein</fullName>
    </recommendedName>
    <alternativeName>
        <fullName evidence="1">Small protein B</fullName>
    </alternativeName>
</protein>
<keyword id="KW-0963">Cytoplasm</keyword>
<keyword id="KW-0694">RNA-binding</keyword>
<name>SSRP_BUCA5</name>
<accession>B8D947</accession>
<feature type="chain" id="PRO_1000197610" description="SsrA-binding protein">
    <location>
        <begin position="1"/>
        <end position="162"/>
    </location>
</feature>
<evidence type="ECO:0000255" key="1">
    <source>
        <dbReference type="HAMAP-Rule" id="MF_00023"/>
    </source>
</evidence>
<comment type="function">
    <text evidence="1">Required for rescue of stalled ribosomes mediated by trans-translation. Binds to transfer-messenger RNA (tmRNA), required for stable association of tmRNA with ribosomes. tmRNA and SmpB together mimic tRNA shape, replacing the anticodon stem-loop with SmpB. tmRNA is encoded by the ssrA gene; the 2 termini fold to resemble tRNA(Ala) and it encodes a 'tag peptide', a short internal open reading frame. During trans-translation Ala-aminoacylated tmRNA acts like a tRNA, entering the A-site of stalled ribosomes, displacing the stalled mRNA. The ribosome then switches to translate the ORF on the tmRNA; the nascent peptide is terminated with the 'tag peptide' encoded by the tmRNA and targeted for degradation. The ribosome is freed to recommence translation, which seems to be the essential function of trans-translation.</text>
</comment>
<comment type="subcellular location">
    <subcellularLocation>
        <location evidence="1">Cytoplasm</location>
    </subcellularLocation>
    <text evidence="1">The tmRNA-SmpB complex associates with stalled 70S ribosomes.</text>
</comment>
<comment type="similarity">
    <text evidence="1">Belongs to the SmpB family.</text>
</comment>
<gene>
    <name evidence="1" type="primary">smpB</name>
    <name type="ordered locus">BUAP5A_249</name>
</gene>
<reference key="1">
    <citation type="journal article" date="2009" name="Science">
        <title>The dynamics and time scale of ongoing genomic erosion in symbiotic bacteria.</title>
        <authorList>
            <person name="Moran N.A."/>
            <person name="McLaughlin H.J."/>
            <person name="Sorek R."/>
        </authorList>
    </citation>
    <scope>NUCLEOTIDE SEQUENCE [LARGE SCALE GENOMIC DNA]</scope>
    <source>
        <strain>5A</strain>
    </source>
</reference>
<proteinExistence type="inferred from homology"/>
<sequence>MLQKKKYQKKSSKIIINKKAYYNYFIEKVFQSGLVLEGWEIKSIRSGKVNISESYIINDRNEMYLCNCLIEPLQMSSNRFSCDPTRKKKLLLHKNEIDFLSLKKKNTGYTMVSLSLFWKKSWCKLEFGLAKGKTAQDKRINLKKREWEQEKLKILKKTKETY</sequence>